<evidence type="ECO:0000255" key="1">
    <source>
        <dbReference type="HAMAP-Rule" id="MF_01102"/>
    </source>
</evidence>
<sequence length="707" mass="78406">MTKKLEHEYIAHTERPALTWDEQGQPYSTEYDDVYYSTTDALAETRFVFLDKNNLAARWPHLTHQQTFTVCETGFGAGLNFLATWQLWRSTRPSGRMHFISFEKHPLNSAQIAKALNRWPQFAALSEQLCALYPPSSAPGFHHITLDEGQVQLTLYFGDAKTGLEQLVLAHGAINKIENRSSCIGDKQQLVDAWYFDGFTPAKNPSIWQPCIFTLAAELSKSTTTFATFTSARSVRDAIENAGFKWQKVPGFGLKREMLFGTFEQHPFAQVDPNKAPTTAHRSYRKRNGVQHSWHLQTANSEHQPPKTAIVIGGGLAGAHAAHALALRGVNVTLLERAPNLANGASSNLQGLVYTRLSLSGNPLSRFNMAAQLYADRFYHSHNFYTTCGEASGVLHLATSNAIEKQLRNIGEQHASTDPNPIFNWVEQQDTEQAVGVSTSTGGLFIRNSGWLNPVQLCHALTNHPRITKLFNSDAAQLQQDAHGQWFALTNDGHKLASADITVICTARDAKHLAQTAYLPMRNIRGQVSHLSSHGLSQRLHASVCGAGYIAPAQSGIHCAGASFNLHENTLDLREEDHQFNIDNLASMSKSLTFNPPLTTLDGKVGFRATTPDYFPIVGPVPIRDEFCERFAGYRKRAATPIPQTGPYYRGLYVSVGYGSRGLAYTPLATESLCHSIFGELQPIATETLLHLHPARFLFRDLTRNRI</sequence>
<comment type="function">
    <text evidence="1">Catalyzes the last two steps in the biosynthesis of 5-methylaminomethyl-2-thiouridine (mnm(5)s(2)U) at the wobble position (U34) in tRNA. Catalyzes the FAD-dependent demodification of cmnm(5)s(2)U34 to nm(5)s(2)U34, followed by the transfer of a methyl group from S-adenosyl-L-methionine to nm(5)s(2)U34, to form mnm(5)s(2)U34.</text>
</comment>
<comment type="catalytic activity">
    <reaction evidence="1">
        <text>5-aminomethyl-2-thiouridine(34) in tRNA + S-adenosyl-L-methionine = 5-methylaminomethyl-2-thiouridine(34) in tRNA + S-adenosyl-L-homocysteine + H(+)</text>
        <dbReference type="Rhea" id="RHEA:19569"/>
        <dbReference type="Rhea" id="RHEA-COMP:10195"/>
        <dbReference type="Rhea" id="RHEA-COMP:10197"/>
        <dbReference type="ChEBI" id="CHEBI:15378"/>
        <dbReference type="ChEBI" id="CHEBI:57856"/>
        <dbReference type="ChEBI" id="CHEBI:59789"/>
        <dbReference type="ChEBI" id="CHEBI:74454"/>
        <dbReference type="ChEBI" id="CHEBI:74455"/>
        <dbReference type="EC" id="2.1.1.61"/>
    </reaction>
</comment>
<comment type="cofactor">
    <cofactor evidence="1">
        <name>FAD</name>
        <dbReference type="ChEBI" id="CHEBI:57692"/>
    </cofactor>
</comment>
<comment type="subcellular location">
    <subcellularLocation>
        <location evidence="1">Cytoplasm</location>
    </subcellularLocation>
</comment>
<comment type="similarity">
    <text evidence="1">In the N-terminal section; belongs to the methyltransferase superfamily. tRNA (mnm(5)s(2)U34)-methyltransferase family.</text>
</comment>
<comment type="similarity">
    <text evidence="1">In the C-terminal section; belongs to the DAO family.</text>
</comment>
<proteinExistence type="inferred from homology"/>
<reference key="1">
    <citation type="journal article" date="2008" name="PLoS Genet.">
        <title>Complete genome sequence of the complex carbohydrate-degrading marine bacterium, Saccharophagus degradans strain 2-40 T.</title>
        <authorList>
            <person name="Weiner R.M."/>
            <person name="Taylor L.E. II"/>
            <person name="Henrissat B."/>
            <person name="Hauser L."/>
            <person name="Land M."/>
            <person name="Coutinho P.M."/>
            <person name="Rancurel C."/>
            <person name="Saunders E.H."/>
            <person name="Longmire A.G."/>
            <person name="Zhang H."/>
            <person name="Bayer E.A."/>
            <person name="Gilbert H.J."/>
            <person name="Larimer F."/>
            <person name="Zhulin I.B."/>
            <person name="Ekborg N.A."/>
            <person name="Lamed R."/>
            <person name="Richardson P.M."/>
            <person name="Borovok I."/>
            <person name="Hutcheson S."/>
        </authorList>
    </citation>
    <scope>NUCLEOTIDE SEQUENCE [LARGE SCALE GENOMIC DNA]</scope>
    <source>
        <strain>2-40 / ATCC 43961 / DSM 17024</strain>
    </source>
</reference>
<gene>
    <name evidence="1" type="primary">mnmC</name>
    <name type="ordered locus">Sde_1471</name>
</gene>
<accession>Q21KP6</accession>
<protein>
    <recommendedName>
        <fullName evidence="1">tRNA 5-methylaminomethyl-2-thiouridine biosynthesis bifunctional protein MnmC</fullName>
        <shortName evidence="1">tRNA mnm(5)s(2)U biosynthesis bifunctional protein</shortName>
    </recommendedName>
    <domain>
        <recommendedName>
            <fullName evidence="1">tRNA (mnm(5)s(2)U34)-methyltransferase</fullName>
            <ecNumber evidence="1">2.1.1.61</ecNumber>
        </recommendedName>
    </domain>
    <domain>
        <recommendedName>
            <fullName evidence="1">FAD-dependent cmnm(5)s(2)U34 oxidoreductase</fullName>
            <ecNumber evidence="1">1.5.-.-</ecNumber>
        </recommendedName>
    </domain>
</protein>
<keyword id="KW-0963">Cytoplasm</keyword>
<keyword id="KW-0274">FAD</keyword>
<keyword id="KW-0285">Flavoprotein</keyword>
<keyword id="KW-0489">Methyltransferase</keyword>
<keyword id="KW-0511">Multifunctional enzyme</keyword>
<keyword id="KW-0560">Oxidoreductase</keyword>
<keyword id="KW-1185">Reference proteome</keyword>
<keyword id="KW-0949">S-adenosyl-L-methionine</keyword>
<keyword id="KW-0808">Transferase</keyword>
<keyword id="KW-0819">tRNA processing</keyword>
<feature type="chain" id="PRO_0000348020" description="tRNA 5-methylaminomethyl-2-thiouridine biosynthesis bifunctional protein MnmC">
    <location>
        <begin position="1"/>
        <end position="707"/>
    </location>
</feature>
<feature type="region of interest" description="tRNA (mnm(5)s(2)U34)-methyltransferase">
    <location>
        <begin position="1"/>
        <end position="264"/>
    </location>
</feature>
<feature type="region of interest" description="FAD-dependent cmnm(5)s(2)U34 oxidoreductase">
    <location>
        <begin position="312"/>
        <end position="707"/>
    </location>
</feature>
<organism>
    <name type="scientific">Saccharophagus degradans (strain 2-40 / ATCC 43961 / DSM 17024)</name>
    <dbReference type="NCBI Taxonomy" id="203122"/>
    <lineage>
        <taxon>Bacteria</taxon>
        <taxon>Pseudomonadati</taxon>
        <taxon>Pseudomonadota</taxon>
        <taxon>Gammaproteobacteria</taxon>
        <taxon>Cellvibrionales</taxon>
        <taxon>Cellvibrionaceae</taxon>
        <taxon>Saccharophagus</taxon>
    </lineage>
</organism>
<dbReference type="EC" id="2.1.1.61" evidence="1"/>
<dbReference type="EC" id="1.5.-.-" evidence="1"/>
<dbReference type="EMBL" id="CP000282">
    <property type="protein sequence ID" value="ABD80733.1"/>
    <property type="molecule type" value="Genomic_DNA"/>
</dbReference>
<dbReference type="RefSeq" id="WP_011467953.1">
    <property type="nucleotide sequence ID" value="NC_007912.1"/>
</dbReference>
<dbReference type="SMR" id="Q21KP6"/>
<dbReference type="STRING" id="203122.Sde_1471"/>
<dbReference type="GeneID" id="98613147"/>
<dbReference type="KEGG" id="sde:Sde_1471"/>
<dbReference type="eggNOG" id="COG0665">
    <property type="taxonomic scope" value="Bacteria"/>
</dbReference>
<dbReference type="eggNOG" id="COG4121">
    <property type="taxonomic scope" value="Bacteria"/>
</dbReference>
<dbReference type="HOGENOM" id="CLU_022427_1_0_6"/>
<dbReference type="OrthoDB" id="9786494at2"/>
<dbReference type="Proteomes" id="UP000001947">
    <property type="component" value="Chromosome"/>
</dbReference>
<dbReference type="GO" id="GO:0005737">
    <property type="term" value="C:cytoplasm"/>
    <property type="evidence" value="ECO:0007669"/>
    <property type="project" value="UniProtKB-SubCell"/>
</dbReference>
<dbReference type="GO" id="GO:0050660">
    <property type="term" value="F:flavin adenine dinucleotide binding"/>
    <property type="evidence" value="ECO:0007669"/>
    <property type="project" value="UniProtKB-UniRule"/>
</dbReference>
<dbReference type="GO" id="GO:0016645">
    <property type="term" value="F:oxidoreductase activity, acting on the CH-NH group of donors"/>
    <property type="evidence" value="ECO:0007669"/>
    <property type="project" value="InterPro"/>
</dbReference>
<dbReference type="GO" id="GO:0004808">
    <property type="term" value="F:tRNA (5-methylaminomethyl-2-thiouridylate)(34)-methyltransferase activity"/>
    <property type="evidence" value="ECO:0007669"/>
    <property type="project" value="UniProtKB-EC"/>
</dbReference>
<dbReference type="GO" id="GO:0032259">
    <property type="term" value="P:methylation"/>
    <property type="evidence" value="ECO:0007669"/>
    <property type="project" value="UniProtKB-KW"/>
</dbReference>
<dbReference type="GO" id="GO:0002097">
    <property type="term" value="P:tRNA wobble base modification"/>
    <property type="evidence" value="ECO:0007669"/>
    <property type="project" value="UniProtKB-UniRule"/>
</dbReference>
<dbReference type="Gene3D" id="3.30.9.10">
    <property type="entry name" value="D-Amino Acid Oxidase, subunit A, domain 2"/>
    <property type="match status" value="1"/>
</dbReference>
<dbReference type="Gene3D" id="3.50.50.60">
    <property type="entry name" value="FAD/NAD(P)-binding domain"/>
    <property type="match status" value="1"/>
</dbReference>
<dbReference type="Gene3D" id="3.40.50.150">
    <property type="entry name" value="Vaccinia Virus protein VP39"/>
    <property type="match status" value="1"/>
</dbReference>
<dbReference type="HAMAP" id="MF_01102">
    <property type="entry name" value="MnmC"/>
    <property type="match status" value="1"/>
</dbReference>
<dbReference type="InterPro" id="IPR006076">
    <property type="entry name" value="FAD-dep_OxRdtase"/>
</dbReference>
<dbReference type="InterPro" id="IPR036188">
    <property type="entry name" value="FAD/NAD-bd_sf"/>
</dbReference>
<dbReference type="InterPro" id="IPR008471">
    <property type="entry name" value="MnmC-like_methylTransf"/>
</dbReference>
<dbReference type="InterPro" id="IPR029063">
    <property type="entry name" value="SAM-dependent_MTases_sf"/>
</dbReference>
<dbReference type="InterPro" id="IPR023032">
    <property type="entry name" value="tRNA_MAMT_biosynth_bifunc_MnmC"/>
</dbReference>
<dbReference type="InterPro" id="IPR047785">
    <property type="entry name" value="tRNA_MNMC2"/>
</dbReference>
<dbReference type="InterPro" id="IPR017610">
    <property type="entry name" value="tRNA_S-uridine_synth_MnmC_C"/>
</dbReference>
<dbReference type="NCBIfam" id="TIGR03197">
    <property type="entry name" value="MnmC_Cterm"/>
    <property type="match status" value="1"/>
</dbReference>
<dbReference type="NCBIfam" id="NF002481">
    <property type="entry name" value="PRK01747.1-2"/>
    <property type="match status" value="1"/>
</dbReference>
<dbReference type="NCBIfam" id="NF033855">
    <property type="entry name" value="tRNA_MNMC2"/>
    <property type="match status" value="1"/>
</dbReference>
<dbReference type="PANTHER" id="PTHR13847">
    <property type="entry name" value="SARCOSINE DEHYDROGENASE-RELATED"/>
    <property type="match status" value="1"/>
</dbReference>
<dbReference type="PANTHER" id="PTHR13847:SF283">
    <property type="entry name" value="TRNA 5-METHYLAMINOMETHYL-2-THIOURIDINE BIOSYNTHESIS BIFUNCTIONAL PROTEIN MNMC"/>
    <property type="match status" value="1"/>
</dbReference>
<dbReference type="Pfam" id="PF01266">
    <property type="entry name" value="DAO"/>
    <property type="match status" value="1"/>
</dbReference>
<dbReference type="Pfam" id="PF05430">
    <property type="entry name" value="Methyltransf_30"/>
    <property type="match status" value="1"/>
</dbReference>
<dbReference type="SUPFAM" id="SSF51905">
    <property type="entry name" value="FAD/NAD(P)-binding domain"/>
    <property type="match status" value="1"/>
</dbReference>
<name>MNMC_SACD2</name>